<keyword id="KW-0687">Ribonucleoprotein</keyword>
<keyword id="KW-0689">Ribosomal protein</keyword>
<gene>
    <name evidence="1" type="primary">rpmD</name>
    <name type="ordered locus">SZO_00680</name>
</gene>
<dbReference type="EMBL" id="FM204884">
    <property type="protein sequence ID" value="CAW97675.1"/>
    <property type="molecule type" value="Genomic_DNA"/>
</dbReference>
<dbReference type="SMR" id="C0ME23"/>
<dbReference type="KEGG" id="seq:SZO_00680"/>
<dbReference type="eggNOG" id="COG1841">
    <property type="taxonomic scope" value="Bacteria"/>
</dbReference>
<dbReference type="HOGENOM" id="CLU_131047_2_1_9"/>
<dbReference type="Proteomes" id="UP000001368">
    <property type="component" value="Chromosome"/>
</dbReference>
<dbReference type="GO" id="GO:0022625">
    <property type="term" value="C:cytosolic large ribosomal subunit"/>
    <property type="evidence" value="ECO:0007669"/>
    <property type="project" value="TreeGrafter"/>
</dbReference>
<dbReference type="GO" id="GO:0003735">
    <property type="term" value="F:structural constituent of ribosome"/>
    <property type="evidence" value="ECO:0007669"/>
    <property type="project" value="InterPro"/>
</dbReference>
<dbReference type="GO" id="GO:0006412">
    <property type="term" value="P:translation"/>
    <property type="evidence" value="ECO:0007669"/>
    <property type="project" value="UniProtKB-UniRule"/>
</dbReference>
<dbReference type="CDD" id="cd01658">
    <property type="entry name" value="Ribosomal_L30"/>
    <property type="match status" value="1"/>
</dbReference>
<dbReference type="FunFam" id="3.30.1390.20:FF:000001">
    <property type="entry name" value="50S ribosomal protein L30"/>
    <property type="match status" value="1"/>
</dbReference>
<dbReference type="Gene3D" id="3.30.1390.20">
    <property type="entry name" value="Ribosomal protein L30, ferredoxin-like fold domain"/>
    <property type="match status" value="1"/>
</dbReference>
<dbReference type="HAMAP" id="MF_01371_B">
    <property type="entry name" value="Ribosomal_uL30_B"/>
    <property type="match status" value="1"/>
</dbReference>
<dbReference type="InterPro" id="IPR036919">
    <property type="entry name" value="Ribo_uL30_ferredoxin-like_sf"/>
</dbReference>
<dbReference type="InterPro" id="IPR005996">
    <property type="entry name" value="Ribosomal_uL30_bac-type"/>
</dbReference>
<dbReference type="InterPro" id="IPR018038">
    <property type="entry name" value="Ribosomal_uL30_CS"/>
</dbReference>
<dbReference type="InterPro" id="IPR016082">
    <property type="entry name" value="Ribosomal_uL30_ferredoxin-like"/>
</dbReference>
<dbReference type="NCBIfam" id="TIGR01308">
    <property type="entry name" value="rpmD_bact"/>
    <property type="match status" value="1"/>
</dbReference>
<dbReference type="PANTHER" id="PTHR15892:SF2">
    <property type="entry name" value="LARGE RIBOSOMAL SUBUNIT PROTEIN UL30M"/>
    <property type="match status" value="1"/>
</dbReference>
<dbReference type="PANTHER" id="PTHR15892">
    <property type="entry name" value="MITOCHONDRIAL RIBOSOMAL PROTEIN L30"/>
    <property type="match status" value="1"/>
</dbReference>
<dbReference type="Pfam" id="PF00327">
    <property type="entry name" value="Ribosomal_L30"/>
    <property type="match status" value="1"/>
</dbReference>
<dbReference type="PIRSF" id="PIRSF002211">
    <property type="entry name" value="Ribosomal_L30_bac-type"/>
    <property type="match status" value="1"/>
</dbReference>
<dbReference type="SUPFAM" id="SSF55129">
    <property type="entry name" value="Ribosomal protein L30p/L7e"/>
    <property type="match status" value="1"/>
</dbReference>
<dbReference type="PROSITE" id="PS00634">
    <property type="entry name" value="RIBOSOMAL_L30"/>
    <property type="match status" value="1"/>
</dbReference>
<proteinExistence type="inferred from homology"/>
<evidence type="ECO:0000255" key="1">
    <source>
        <dbReference type="HAMAP-Rule" id="MF_01371"/>
    </source>
</evidence>
<evidence type="ECO:0000305" key="2"/>
<name>RL30_STRS7</name>
<organism>
    <name type="scientific">Streptococcus equi subsp. zooepidemicus (strain H70)</name>
    <dbReference type="NCBI Taxonomy" id="553483"/>
    <lineage>
        <taxon>Bacteria</taxon>
        <taxon>Bacillati</taxon>
        <taxon>Bacillota</taxon>
        <taxon>Bacilli</taxon>
        <taxon>Lactobacillales</taxon>
        <taxon>Streptococcaceae</taxon>
        <taxon>Streptococcus</taxon>
    </lineage>
</organism>
<comment type="subunit">
    <text evidence="1">Part of the 50S ribosomal subunit.</text>
</comment>
<comment type="similarity">
    <text evidence="1">Belongs to the universal ribosomal protein uL30 family.</text>
</comment>
<accession>C0ME23</accession>
<sequence length="60" mass="6456">MAQIKITLTKSPIGRKPEQRKTVVALGLGKLNSSVIKEDNAAIRGMVTAISHLVTVEDVK</sequence>
<reference key="1">
    <citation type="journal article" date="2009" name="PLoS Pathog.">
        <title>Genomic evidence for the evolution of Streptococcus equi: host restriction, increased virulence, and genetic exchange with human pathogens.</title>
        <authorList>
            <person name="Holden M.T.G."/>
            <person name="Heather Z."/>
            <person name="Paillot R."/>
            <person name="Steward K.F."/>
            <person name="Webb K."/>
            <person name="Ainslie F."/>
            <person name="Jourdan T."/>
            <person name="Bason N.C."/>
            <person name="Holroyd N.E."/>
            <person name="Mungall K."/>
            <person name="Quail M.A."/>
            <person name="Sanders M."/>
            <person name="Simmonds M."/>
            <person name="Willey D."/>
            <person name="Brooks K."/>
            <person name="Aanensen D.M."/>
            <person name="Spratt B.G."/>
            <person name="Jolley K.A."/>
            <person name="Maiden M.C.J."/>
            <person name="Kehoe M."/>
            <person name="Chanter N."/>
            <person name="Bentley S.D."/>
            <person name="Robinson C."/>
            <person name="Maskell D.J."/>
            <person name="Parkhill J."/>
            <person name="Waller A.S."/>
        </authorList>
    </citation>
    <scope>NUCLEOTIDE SEQUENCE [LARGE SCALE GENOMIC DNA]</scope>
    <source>
        <strain>H70</strain>
    </source>
</reference>
<feature type="chain" id="PRO_1000215074" description="Large ribosomal subunit protein uL30">
    <location>
        <begin position="1"/>
        <end position="60"/>
    </location>
</feature>
<protein>
    <recommendedName>
        <fullName evidence="1">Large ribosomal subunit protein uL30</fullName>
    </recommendedName>
    <alternativeName>
        <fullName evidence="2">50S ribosomal protein L30</fullName>
    </alternativeName>
</protein>